<proteinExistence type="evidence at transcript level"/>
<gene>
    <name type="primary">Gr39a</name>
    <name type="synonym">GR39D.2</name>
    <name type="ORF">CG31622</name>
</gene>
<reference key="1">
    <citation type="journal article" date="2000" name="Science">
        <title>The genome sequence of Drosophila melanogaster.</title>
        <authorList>
            <person name="Adams M.D."/>
            <person name="Celniker S.E."/>
            <person name="Holt R.A."/>
            <person name="Evans C.A."/>
            <person name="Gocayne J.D."/>
            <person name="Amanatides P.G."/>
            <person name="Scherer S.E."/>
            <person name="Li P.W."/>
            <person name="Hoskins R.A."/>
            <person name="Galle R.F."/>
            <person name="George R.A."/>
            <person name="Lewis S.E."/>
            <person name="Richards S."/>
            <person name="Ashburner M."/>
            <person name="Henderson S.N."/>
            <person name="Sutton G.G."/>
            <person name="Wortman J.R."/>
            <person name="Yandell M.D."/>
            <person name="Zhang Q."/>
            <person name="Chen L.X."/>
            <person name="Brandon R.C."/>
            <person name="Rogers Y.-H.C."/>
            <person name="Blazej R.G."/>
            <person name="Champe M."/>
            <person name="Pfeiffer B.D."/>
            <person name="Wan K.H."/>
            <person name="Doyle C."/>
            <person name="Baxter E.G."/>
            <person name="Helt G."/>
            <person name="Nelson C.R."/>
            <person name="Miklos G.L.G."/>
            <person name="Abril J.F."/>
            <person name="Agbayani A."/>
            <person name="An H.-J."/>
            <person name="Andrews-Pfannkoch C."/>
            <person name="Baldwin D."/>
            <person name="Ballew R.M."/>
            <person name="Basu A."/>
            <person name="Baxendale J."/>
            <person name="Bayraktaroglu L."/>
            <person name="Beasley E.M."/>
            <person name="Beeson K.Y."/>
            <person name="Benos P.V."/>
            <person name="Berman B.P."/>
            <person name="Bhandari D."/>
            <person name="Bolshakov S."/>
            <person name="Borkova D."/>
            <person name="Botchan M.R."/>
            <person name="Bouck J."/>
            <person name="Brokstein P."/>
            <person name="Brottier P."/>
            <person name="Burtis K.C."/>
            <person name="Busam D.A."/>
            <person name="Butler H."/>
            <person name="Cadieu E."/>
            <person name="Center A."/>
            <person name="Chandra I."/>
            <person name="Cherry J.M."/>
            <person name="Cawley S."/>
            <person name="Dahlke C."/>
            <person name="Davenport L.B."/>
            <person name="Davies P."/>
            <person name="de Pablos B."/>
            <person name="Delcher A."/>
            <person name="Deng Z."/>
            <person name="Mays A.D."/>
            <person name="Dew I."/>
            <person name="Dietz S.M."/>
            <person name="Dodson K."/>
            <person name="Doup L.E."/>
            <person name="Downes M."/>
            <person name="Dugan-Rocha S."/>
            <person name="Dunkov B.C."/>
            <person name="Dunn P."/>
            <person name="Durbin K.J."/>
            <person name="Evangelista C.C."/>
            <person name="Ferraz C."/>
            <person name="Ferriera S."/>
            <person name="Fleischmann W."/>
            <person name="Fosler C."/>
            <person name="Gabrielian A.E."/>
            <person name="Garg N.S."/>
            <person name="Gelbart W.M."/>
            <person name="Glasser K."/>
            <person name="Glodek A."/>
            <person name="Gong F."/>
            <person name="Gorrell J.H."/>
            <person name="Gu Z."/>
            <person name="Guan P."/>
            <person name="Harris M."/>
            <person name="Harris N.L."/>
            <person name="Harvey D.A."/>
            <person name="Heiman T.J."/>
            <person name="Hernandez J.R."/>
            <person name="Houck J."/>
            <person name="Hostin D."/>
            <person name="Houston K.A."/>
            <person name="Howland T.J."/>
            <person name="Wei M.-H."/>
            <person name="Ibegwam C."/>
            <person name="Jalali M."/>
            <person name="Kalush F."/>
            <person name="Karpen G.H."/>
            <person name="Ke Z."/>
            <person name="Kennison J.A."/>
            <person name="Ketchum K.A."/>
            <person name="Kimmel B.E."/>
            <person name="Kodira C.D."/>
            <person name="Kraft C.L."/>
            <person name="Kravitz S."/>
            <person name="Kulp D."/>
            <person name="Lai Z."/>
            <person name="Lasko P."/>
            <person name="Lei Y."/>
            <person name="Levitsky A.A."/>
            <person name="Li J.H."/>
            <person name="Li Z."/>
            <person name="Liang Y."/>
            <person name="Lin X."/>
            <person name="Liu X."/>
            <person name="Mattei B."/>
            <person name="McIntosh T.C."/>
            <person name="McLeod M.P."/>
            <person name="McPherson D."/>
            <person name="Merkulov G."/>
            <person name="Milshina N.V."/>
            <person name="Mobarry C."/>
            <person name="Morris J."/>
            <person name="Moshrefi A."/>
            <person name="Mount S.M."/>
            <person name="Moy M."/>
            <person name="Murphy B."/>
            <person name="Murphy L."/>
            <person name="Muzny D.M."/>
            <person name="Nelson D.L."/>
            <person name="Nelson D.R."/>
            <person name="Nelson K.A."/>
            <person name="Nixon K."/>
            <person name="Nusskern D.R."/>
            <person name="Pacleb J.M."/>
            <person name="Palazzolo M."/>
            <person name="Pittman G.S."/>
            <person name="Pan S."/>
            <person name="Pollard J."/>
            <person name="Puri V."/>
            <person name="Reese M.G."/>
            <person name="Reinert K."/>
            <person name="Remington K."/>
            <person name="Saunders R.D.C."/>
            <person name="Scheeler F."/>
            <person name="Shen H."/>
            <person name="Shue B.C."/>
            <person name="Siden-Kiamos I."/>
            <person name="Simpson M."/>
            <person name="Skupski M.P."/>
            <person name="Smith T.J."/>
            <person name="Spier E."/>
            <person name="Spradling A.C."/>
            <person name="Stapleton M."/>
            <person name="Strong R."/>
            <person name="Sun E."/>
            <person name="Svirskas R."/>
            <person name="Tector C."/>
            <person name="Turner R."/>
            <person name="Venter E."/>
            <person name="Wang A.H."/>
            <person name="Wang X."/>
            <person name="Wang Z.-Y."/>
            <person name="Wassarman D.A."/>
            <person name="Weinstock G.M."/>
            <person name="Weissenbach J."/>
            <person name="Williams S.M."/>
            <person name="Woodage T."/>
            <person name="Worley K.C."/>
            <person name="Wu D."/>
            <person name="Yang S."/>
            <person name="Yao Q.A."/>
            <person name="Ye J."/>
            <person name="Yeh R.-F."/>
            <person name="Zaveri J.S."/>
            <person name="Zhan M."/>
            <person name="Zhang G."/>
            <person name="Zhao Q."/>
            <person name="Zheng L."/>
            <person name="Zheng X.H."/>
            <person name="Zhong F.N."/>
            <person name="Zhong W."/>
            <person name="Zhou X."/>
            <person name="Zhu S.C."/>
            <person name="Zhu X."/>
            <person name="Smith H.O."/>
            <person name="Gibbs R.A."/>
            <person name="Myers E.W."/>
            <person name="Rubin G.M."/>
            <person name="Venter J.C."/>
        </authorList>
    </citation>
    <scope>NUCLEOTIDE SEQUENCE [LARGE SCALE GENOMIC DNA]</scope>
    <source>
        <strain>Berkeley</strain>
    </source>
</reference>
<reference key="2">
    <citation type="journal article" date="2002" name="Genome Biol.">
        <title>Annotation of the Drosophila melanogaster euchromatic genome: a systematic review.</title>
        <authorList>
            <person name="Misra S."/>
            <person name="Crosby M.A."/>
            <person name="Mungall C.J."/>
            <person name="Matthews B.B."/>
            <person name="Campbell K.S."/>
            <person name="Hradecky P."/>
            <person name="Huang Y."/>
            <person name="Kaminker J.S."/>
            <person name="Millburn G.H."/>
            <person name="Prochnik S.E."/>
            <person name="Smith C.D."/>
            <person name="Tupy J.L."/>
            <person name="Whitfield E.J."/>
            <person name="Bayraktaroglu L."/>
            <person name="Berman B.P."/>
            <person name="Bettencourt B.R."/>
            <person name="Celniker S.E."/>
            <person name="de Grey A.D.N.J."/>
            <person name="Drysdale R.A."/>
            <person name="Harris N.L."/>
            <person name="Richter J."/>
            <person name="Russo S."/>
            <person name="Schroeder A.J."/>
            <person name="Shu S.Q."/>
            <person name="Stapleton M."/>
            <person name="Yamada C."/>
            <person name="Ashburner M."/>
            <person name="Gelbart W.M."/>
            <person name="Rubin G.M."/>
            <person name="Lewis S.E."/>
        </authorList>
    </citation>
    <scope>GENOME REANNOTATION</scope>
    <source>
        <strain>Berkeley</strain>
    </source>
</reference>
<reference key="3">
    <citation type="journal article" date="2000" name="Science">
        <title>Candidate taste receptors in Drosophila.</title>
        <authorList>
            <person name="Clyne P.J."/>
            <person name="Warr C.G."/>
            <person name="Carlson J.R."/>
        </authorList>
    </citation>
    <scope>IDENTIFICATION</scope>
    <scope>TISSUE SPECIFICITY</scope>
</reference>
<reference key="4">
    <citation type="journal article" date="2001" name="Curr. Biol.">
        <title>Spatially restricted expression of candidate taste receptors in the Drosophila gustatory system.</title>
        <authorList>
            <person name="Dunipace L."/>
            <person name="Meister S."/>
            <person name="McNealy C."/>
            <person name="Amrein H."/>
        </authorList>
    </citation>
    <scope>IDENTIFICATION</scope>
</reference>
<reference key="5">
    <citation type="journal article" date="2011" name="Behav. Genet.">
        <title>Gr39a, a highly diversified gustatory receptor in Drosophila, has a role in sexual behavior.</title>
        <authorList>
            <person name="Watanabe K."/>
            <person name="Toba G."/>
            <person name="Koganezawa M."/>
            <person name="Yamamoto D."/>
        </authorList>
    </citation>
    <scope>FUNCTION</scope>
    <scope>DISRUPTION PHENOTYPE</scope>
</reference>
<reference key="6">
    <citation type="journal article" date="2011" name="J. Neurosci.">
        <title>Molecular and cellular organization of the taste system in the Drosophila larva.</title>
        <authorList>
            <person name="Kwon J.Y."/>
            <person name="Dahanukar A."/>
            <person name="Weiss L.A."/>
            <person name="Carlson J.R."/>
        </authorList>
    </citation>
    <scope>TISSUE SPECIFICITY</scope>
</reference>
<keyword id="KW-0025">Alternative splicing</keyword>
<keyword id="KW-1003">Cell membrane</keyword>
<keyword id="KW-0325">Glycoprotein</keyword>
<keyword id="KW-0472">Membrane</keyword>
<keyword id="KW-0675">Receptor</keyword>
<keyword id="KW-1185">Reference proteome</keyword>
<keyword id="KW-0807">Transducer</keyword>
<keyword id="KW-0812">Transmembrane</keyword>
<keyword id="KW-1133">Transmembrane helix</keyword>
<sequence>MSKVCRDLRIYLRLLHIMGMMCWHFDSDHCQLVATSGSERYAVVYAGCILVSTTAGFIFALLHPSRFHIAIYNQTGNFYEAVIFRSTCVVLFLVYVILYAWRHRYRDLVQHILRLNRRCASSCTNQQFLHNIILYGMLTILCFGNYLHGYTRAGLATLPLALCMLVYIFAFLVLCLLLMFFVSLKQVMTAGLIHYNQQLCQGDLISGLRGRQQILKLCGGELNECFGLLMLPIVALVLLMAPSGPFFLISTVLEGKFRPDECLIMLLTSSTWDTPWMIMLVLMLRTNGISEEANKTAKMLTKVPRTGTGLDRMIEKFLLKNLRQKPILTAYGFFALDKSTLFKLFTAIFTYMVILVQFKEMENSTKSINKF</sequence>
<evidence type="ECO:0000250" key="1"/>
<evidence type="ECO:0000255" key="2"/>
<evidence type="ECO:0000269" key="3">
    <source>
    </source>
</evidence>
<evidence type="ECO:0000269" key="4">
    <source>
    </source>
</evidence>
<evidence type="ECO:0000269" key="5">
    <source>
    </source>
</evidence>
<evidence type="ECO:0000305" key="6"/>
<protein>
    <recommendedName>
        <fullName>Gustatory and pheromone receptor 39a, isoform A</fullName>
    </recommendedName>
</protein>
<accession>P58959</accession>
<feature type="chain" id="PRO_0000216512" description="Gustatory and pheromone receptor 39a, isoform A">
    <location>
        <begin position="1"/>
        <end position="371"/>
    </location>
</feature>
<feature type="topological domain" description="Cytoplasmic" evidence="1">
    <location>
        <begin position="1"/>
        <end position="41"/>
    </location>
</feature>
<feature type="transmembrane region" description="Helical; Name=1" evidence="2">
    <location>
        <begin position="42"/>
        <end position="62"/>
    </location>
</feature>
<feature type="topological domain" description="Extracellular" evidence="1">
    <location>
        <begin position="63"/>
        <end position="80"/>
    </location>
</feature>
<feature type="transmembrane region" description="Helical; Name=2" evidence="2">
    <location>
        <begin position="81"/>
        <end position="101"/>
    </location>
</feature>
<feature type="topological domain" description="Cytoplasmic" evidence="1">
    <location>
        <begin position="102"/>
        <end position="127"/>
    </location>
</feature>
<feature type="transmembrane region" description="Helical; Name=3" evidence="2">
    <location>
        <begin position="128"/>
        <end position="148"/>
    </location>
</feature>
<feature type="topological domain" description="Extracellular" evidence="1">
    <location>
        <begin position="149"/>
        <end position="161"/>
    </location>
</feature>
<feature type="transmembrane region" description="Helical; Name=4" evidence="2">
    <location>
        <begin position="162"/>
        <end position="182"/>
    </location>
</feature>
<feature type="topological domain" description="Cytoplasmic" evidence="1">
    <location>
        <begin position="183"/>
        <end position="228"/>
    </location>
</feature>
<feature type="transmembrane region" description="Helical; Name=5" evidence="2">
    <location>
        <begin position="229"/>
        <end position="249"/>
    </location>
</feature>
<feature type="topological domain" description="Extracellular" evidence="1">
    <location>
        <begin position="250"/>
        <end position="263"/>
    </location>
</feature>
<feature type="transmembrane region" description="Helical; Name=6" evidence="2">
    <location>
        <begin position="264"/>
        <end position="284"/>
    </location>
</feature>
<feature type="topological domain" description="Cytoplasmic" evidence="1">
    <location>
        <begin position="285"/>
        <end position="340"/>
    </location>
</feature>
<feature type="transmembrane region" description="Helical; Name=7" evidence="2">
    <location>
        <begin position="341"/>
        <end position="361"/>
    </location>
</feature>
<feature type="topological domain" description="Extracellular" evidence="1">
    <location>
        <begin position="362"/>
        <end position="371"/>
    </location>
</feature>
<feature type="glycosylation site" description="N-linked (GlcNAc...) asparagine" evidence="2">
    <location>
        <position position="73"/>
    </location>
</feature>
<feature type="glycosylation site" description="N-linked (GlcNAc...) asparagine" evidence="2">
    <location>
        <position position="363"/>
    </location>
</feature>
<comment type="function">
    <text evidence="4">Gustatory receptor which mediates acceptance or avoidance behavior, depending on its substrates. Plays a role in sustaining courtship behavior in males, possibly through the reception of a stimulating arrestant pheromone.</text>
</comment>
<comment type="subcellular location">
    <subcellularLocation>
        <location evidence="1">Cell membrane</location>
        <topology evidence="1">Multi-pass membrane protein</topology>
    </subcellularLocation>
</comment>
<comment type="alternative products">
    <event type="alternative splicing"/>
    <isoform>
        <id>P58959-1</id>
        <name>A</name>
        <sequence type="displayed"/>
    </isoform>
    <isoform>
        <id>P58956-1</id>
        <name>B</name>
        <sequence type="external"/>
    </isoform>
    <isoform>
        <id>P58957-1</id>
        <name>C</name>
        <sequence type="external"/>
    </isoform>
    <isoform>
        <id>P58958-1</id>
        <name>D</name>
        <sequence type="external"/>
    </isoform>
</comment>
<comment type="tissue specificity">
    <text evidence="3 5">Expressed in the adult labellar chemosensory neurons, and adult thorax and wing. In larvae, is expressed in neurons of the posterior pharyngeal sense organ.</text>
</comment>
<comment type="disruption phenotype">
    <text evidence="4">Leads to reduced courtship levels toward females.</text>
</comment>
<comment type="similarity">
    <text evidence="6">Belongs to the insect chemoreceptor superfamily. Gustatory receptor (GR) family. Gr21a subfamily.</text>
</comment>
<dbReference type="EMBL" id="AE014134">
    <property type="protein sequence ID" value="AAN11117.1"/>
    <property type="molecule type" value="Genomic_DNA"/>
</dbReference>
<dbReference type="RefSeq" id="NP_724332.1">
    <molecule id="P58959-1"/>
    <property type="nucleotide sequence ID" value="NM_165373.1"/>
</dbReference>
<dbReference type="SMR" id="P58959"/>
<dbReference type="IntAct" id="P58959">
    <property type="interactions" value="3"/>
</dbReference>
<dbReference type="GlyCosmos" id="P58959">
    <property type="glycosylation" value="2 sites, No reported glycans"/>
</dbReference>
<dbReference type="EnsemblMetazoa" id="FBtr0081511">
    <molecule id="P58959-1"/>
    <property type="protein sequence ID" value="FBpp0081039"/>
    <property type="gene ID" value="FBgn0264556"/>
</dbReference>
<dbReference type="GeneID" id="117346"/>
<dbReference type="AGR" id="FB:FBgn0264556"/>
<dbReference type="CTD" id="117346"/>
<dbReference type="FlyBase" id="FBgn0264556">
    <property type="gene designation" value="Gr39a"/>
</dbReference>
<dbReference type="VEuPathDB" id="VectorBase:FBgn0264556"/>
<dbReference type="GeneTree" id="ENSGT00940000166130"/>
<dbReference type="OrthoDB" id="6748730at2759"/>
<dbReference type="BioGRID-ORCS" id="117346">
    <property type="hits" value="0 hits in 1 CRISPR screen"/>
</dbReference>
<dbReference type="GenomeRNAi" id="117346"/>
<dbReference type="Proteomes" id="UP000000803">
    <property type="component" value="Chromosome 2L"/>
</dbReference>
<dbReference type="Bgee" id="FBgn0264556">
    <property type="expression patterns" value="Expressed in adult Malpighian tubule principal cell of lower segment in Malpighian tubule and 39 other cell types or tissues"/>
</dbReference>
<dbReference type="ExpressionAtlas" id="P58959">
    <property type="expression patterns" value="baseline and differential"/>
</dbReference>
<dbReference type="GO" id="GO:0030424">
    <property type="term" value="C:axon"/>
    <property type="evidence" value="ECO:0000318"/>
    <property type="project" value="GO_Central"/>
</dbReference>
<dbReference type="GO" id="GO:0030425">
    <property type="term" value="C:dendrite"/>
    <property type="evidence" value="ECO:0000318"/>
    <property type="project" value="GO_Central"/>
</dbReference>
<dbReference type="GO" id="GO:0016020">
    <property type="term" value="C:membrane"/>
    <property type="evidence" value="ECO:0000303"/>
    <property type="project" value="UniProtKB"/>
</dbReference>
<dbReference type="GO" id="GO:0043025">
    <property type="term" value="C:neuronal cell body"/>
    <property type="evidence" value="ECO:0000318"/>
    <property type="project" value="GO_Central"/>
</dbReference>
<dbReference type="GO" id="GO:0005886">
    <property type="term" value="C:plasma membrane"/>
    <property type="evidence" value="ECO:0007669"/>
    <property type="project" value="UniProtKB-SubCell"/>
</dbReference>
<dbReference type="GO" id="GO:0008527">
    <property type="term" value="F:taste receptor activity"/>
    <property type="evidence" value="ECO:0000303"/>
    <property type="project" value="UniProtKB"/>
</dbReference>
<dbReference type="GO" id="GO:0007635">
    <property type="term" value="P:chemosensory behavior"/>
    <property type="evidence" value="ECO:0000318"/>
    <property type="project" value="GO_Central"/>
</dbReference>
<dbReference type="GO" id="GO:0008049">
    <property type="term" value="P:male courtship behavior"/>
    <property type="evidence" value="ECO:0000315"/>
    <property type="project" value="FlyBase"/>
</dbReference>
<dbReference type="GO" id="GO:0050909">
    <property type="term" value="P:sensory perception of taste"/>
    <property type="evidence" value="ECO:0000303"/>
    <property type="project" value="UniProtKB"/>
</dbReference>
<dbReference type="GO" id="GO:0007165">
    <property type="term" value="P:signal transduction"/>
    <property type="evidence" value="ECO:0007669"/>
    <property type="project" value="UniProtKB-KW"/>
</dbReference>
<dbReference type="InterPro" id="IPR013604">
    <property type="entry name" value="7TM_chemorcpt"/>
</dbReference>
<dbReference type="PANTHER" id="PTHR21143:SF133">
    <property type="entry name" value="GUSTATORY AND PHEROMONE RECEPTOR 32A-RELATED"/>
    <property type="match status" value="1"/>
</dbReference>
<dbReference type="PANTHER" id="PTHR21143">
    <property type="entry name" value="INVERTEBRATE GUSTATORY RECEPTOR"/>
    <property type="match status" value="1"/>
</dbReference>
<dbReference type="Pfam" id="PF08395">
    <property type="entry name" value="7tm_7"/>
    <property type="match status" value="1"/>
</dbReference>
<name>G39AD_DROME</name>
<organism>
    <name type="scientific">Drosophila melanogaster</name>
    <name type="common">Fruit fly</name>
    <dbReference type="NCBI Taxonomy" id="7227"/>
    <lineage>
        <taxon>Eukaryota</taxon>
        <taxon>Metazoa</taxon>
        <taxon>Ecdysozoa</taxon>
        <taxon>Arthropoda</taxon>
        <taxon>Hexapoda</taxon>
        <taxon>Insecta</taxon>
        <taxon>Pterygota</taxon>
        <taxon>Neoptera</taxon>
        <taxon>Endopterygota</taxon>
        <taxon>Diptera</taxon>
        <taxon>Brachycera</taxon>
        <taxon>Muscomorpha</taxon>
        <taxon>Ephydroidea</taxon>
        <taxon>Drosophilidae</taxon>
        <taxon>Drosophila</taxon>
        <taxon>Sophophora</taxon>
    </lineage>
</organism>